<evidence type="ECO:0000255" key="1">
    <source>
        <dbReference type="HAMAP-Rule" id="MF_01541"/>
    </source>
</evidence>
<sequence length="597" mass="65887">MSNTTNPLPPETEQLLAKLNPIQLAWLSGYAWAKAQGEDAGTNVTNKNAASTLVTEDKPLNVTVLSASQTGNANGVANQLAERLKAEGVNVTRKALKEYKAKTIGDEQFVLLVTSTQGEGEAPEEGVPLYKLLHGKKAPNLANLEFAVLGLGDTSYPNFCQAGKDFDKRFEELGAKRLLARADADLDFKSTADKWIQDVVEAVKAKSAVSASVVASVVSASSAQSAVNYSKENPYTAKLITNQKITARDSAKDVRHFEFDLSGSGLQYKAGDALGVWAENDPDLINEVLGLLKIQPDESVQLNGKSLDIHGALLSRLELTQNTPAFVKGYAQLANNKKLTALVSSDKKLADYVNDTPIVDVLHDFPAKISAQQFADLLRPLTPRLYSISSSPEEVGEEVHLSVGVVRFEHEGRARTGVASGFLADRVEEDGEVKIFVEPNDNFRLPQDKSKPIIMIGSGTGIAPFRAFLQQRQAEEAEGKNWLIFGNQHFATDFLYQAEWQQFVKDGYLHKYDFAWSRDQAEKIYVQDKIREKSTALWQWLQEGAHVYVCGDASKMAKDVENALLEVIAREGKLTPEDAEEYLNDLREDKRYQRDVY</sequence>
<keyword id="KW-0028">Amino-acid biosynthesis</keyword>
<keyword id="KW-0198">Cysteine biosynthesis</keyword>
<keyword id="KW-0249">Electron transport</keyword>
<keyword id="KW-0274">FAD</keyword>
<keyword id="KW-0285">Flavoprotein</keyword>
<keyword id="KW-0288">FMN</keyword>
<keyword id="KW-0521">NADP</keyword>
<keyword id="KW-0560">Oxidoreductase</keyword>
<keyword id="KW-0813">Transport</keyword>
<organism>
    <name type="scientific">Mannheimia succiniciproducens (strain KCTC 0769BP / MBEL55E)</name>
    <dbReference type="NCBI Taxonomy" id="221988"/>
    <lineage>
        <taxon>Bacteria</taxon>
        <taxon>Pseudomonadati</taxon>
        <taxon>Pseudomonadota</taxon>
        <taxon>Gammaproteobacteria</taxon>
        <taxon>Pasteurellales</taxon>
        <taxon>Pasteurellaceae</taxon>
        <taxon>Basfia</taxon>
    </lineage>
</organism>
<comment type="function">
    <text evidence="1">Component of the sulfite reductase complex that catalyzes the 6-electron reduction of sulfite to sulfide. This is one of several activities required for the biosynthesis of L-cysteine from sulfate. The flavoprotein component catalyzes the electron flow from NADPH -&gt; FAD -&gt; FMN to the hemoprotein component.</text>
</comment>
<comment type="catalytic activity">
    <reaction evidence="1">
        <text>hydrogen sulfide + 3 NADP(+) + 3 H2O = sulfite + 3 NADPH + 4 H(+)</text>
        <dbReference type="Rhea" id="RHEA:13801"/>
        <dbReference type="ChEBI" id="CHEBI:15377"/>
        <dbReference type="ChEBI" id="CHEBI:15378"/>
        <dbReference type="ChEBI" id="CHEBI:17359"/>
        <dbReference type="ChEBI" id="CHEBI:29919"/>
        <dbReference type="ChEBI" id="CHEBI:57783"/>
        <dbReference type="ChEBI" id="CHEBI:58349"/>
        <dbReference type="EC" id="1.8.1.2"/>
    </reaction>
</comment>
<comment type="cofactor">
    <cofactor evidence="1">
        <name>FAD</name>
        <dbReference type="ChEBI" id="CHEBI:57692"/>
    </cofactor>
    <text evidence="1">Binds 1 FAD per subunit.</text>
</comment>
<comment type="cofactor">
    <cofactor evidence="1">
        <name>FMN</name>
        <dbReference type="ChEBI" id="CHEBI:58210"/>
    </cofactor>
    <text evidence="1">Binds 1 FMN per subunit.</text>
</comment>
<comment type="pathway">
    <text evidence="1">Sulfur metabolism; hydrogen sulfide biosynthesis; hydrogen sulfide from sulfite (NADPH route): step 1/1.</text>
</comment>
<comment type="subunit">
    <text evidence="1">Alpha(8)-beta(8). The alpha component is a flavoprotein, the beta component is a hemoprotein.</text>
</comment>
<comment type="similarity">
    <text evidence="1">Belongs to the NADPH-dependent sulphite reductase flavoprotein subunit CysJ family.</text>
</comment>
<comment type="similarity">
    <text evidence="1">In the N-terminal section; belongs to the flavodoxin family.</text>
</comment>
<comment type="similarity">
    <text evidence="1">In the C-terminal section; belongs to the flavoprotein pyridine nucleotide cytochrome reductase family.</text>
</comment>
<name>CYSJ_MANSM</name>
<protein>
    <recommendedName>
        <fullName evidence="1">Sulfite reductase [NADPH] flavoprotein alpha-component</fullName>
        <shortName evidence="1">SiR-FP</shortName>
        <ecNumber evidence="1">1.8.1.2</ecNumber>
    </recommendedName>
</protein>
<gene>
    <name evidence="1" type="primary">cysJ</name>
    <name type="ordered locus">MS1250</name>
</gene>
<reference key="1">
    <citation type="journal article" date="2004" name="Nat. Biotechnol.">
        <title>The genome sequence of the capnophilic rumen bacterium Mannheimia succiniciproducens.</title>
        <authorList>
            <person name="Hong S.H."/>
            <person name="Kim J.S."/>
            <person name="Lee S.Y."/>
            <person name="In Y.H."/>
            <person name="Choi S.S."/>
            <person name="Rih J.-K."/>
            <person name="Kim C.H."/>
            <person name="Jeong H."/>
            <person name="Hur C.G."/>
            <person name="Kim J.J."/>
        </authorList>
    </citation>
    <scope>NUCLEOTIDE SEQUENCE [LARGE SCALE GENOMIC DNA]</scope>
    <source>
        <strain>KCTC 0769BP / MBEL55E</strain>
    </source>
</reference>
<accession>Q65T53</accession>
<feature type="chain" id="PRO_0000199927" description="Sulfite reductase [NADPH] flavoprotein alpha-component">
    <location>
        <begin position="1"/>
        <end position="597"/>
    </location>
</feature>
<feature type="domain" description="Flavodoxin-like" evidence="1">
    <location>
        <begin position="62"/>
        <end position="200"/>
    </location>
</feature>
<feature type="domain" description="FAD-binding FR-type" evidence="1">
    <location>
        <begin position="232"/>
        <end position="446"/>
    </location>
</feature>
<feature type="binding site" evidence="1">
    <location>
        <begin position="68"/>
        <end position="73"/>
    </location>
    <ligand>
        <name>FMN</name>
        <dbReference type="ChEBI" id="CHEBI:58210"/>
    </ligand>
</feature>
<feature type="binding site" evidence="1">
    <location>
        <begin position="115"/>
        <end position="118"/>
    </location>
    <ligand>
        <name>FMN</name>
        <dbReference type="ChEBI" id="CHEBI:58210"/>
    </ligand>
</feature>
<feature type="binding site" evidence="1">
    <location>
        <begin position="151"/>
        <end position="160"/>
    </location>
    <ligand>
        <name>FMN</name>
        <dbReference type="ChEBI" id="CHEBI:58210"/>
    </ligand>
</feature>
<feature type="binding site" evidence="1">
    <location>
        <position position="320"/>
    </location>
    <ligand>
        <name>FAD</name>
        <dbReference type="ChEBI" id="CHEBI:57692"/>
    </ligand>
</feature>
<feature type="binding site" evidence="1">
    <location>
        <position position="354"/>
    </location>
    <ligand>
        <name>FAD</name>
        <dbReference type="ChEBI" id="CHEBI:57692"/>
    </ligand>
</feature>
<feature type="binding site" evidence="1">
    <location>
        <begin position="384"/>
        <end position="387"/>
    </location>
    <ligand>
        <name>FAD</name>
        <dbReference type="ChEBI" id="CHEBI:57692"/>
    </ligand>
</feature>
<feature type="binding site" evidence="1">
    <location>
        <begin position="402"/>
        <end position="404"/>
    </location>
    <ligand>
        <name>FAD</name>
        <dbReference type="ChEBI" id="CHEBI:57692"/>
    </ligand>
</feature>
<feature type="binding site" evidence="1">
    <location>
        <begin position="417"/>
        <end position="420"/>
    </location>
    <ligand>
        <name>FAD</name>
        <dbReference type="ChEBI" id="CHEBI:57692"/>
    </ligand>
</feature>
<feature type="binding site" evidence="1">
    <location>
        <begin position="517"/>
        <end position="518"/>
    </location>
    <ligand>
        <name>NADP(+)</name>
        <dbReference type="ChEBI" id="CHEBI:58349"/>
    </ligand>
</feature>
<feature type="binding site" evidence="1">
    <location>
        <begin position="523"/>
        <end position="527"/>
    </location>
    <ligand>
        <name>NADP(+)</name>
        <dbReference type="ChEBI" id="CHEBI:58349"/>
    </ligand>
</feature>
<feature type="binding site" evidence="1">
    <location>
        <position position="559"/>
    </location>
    <ligand>
        <name>NADP(+)</name>
        <dbReference type="ChEBI" id="CHEBI:58349"/>
    </ligand>
</feature>
<feature type="binding site" evidence="1">
    <location>
        <position position="597"/>
    </location>
    <ligand>
        <name>FAD</name>
        <dbReference type="ChEBI" id="CHEBI:57692"/>
    </ligand>
</feature>
<dbReference type="EC" id="1.8.1.2" evidence="1"/>
<dbReference type="EMBL" id="AE016827">
    <property type="protein sequence ID" value="AAU37857.1"/>
    <property type="molecule type" value="Genomic_DNA"/>
</dbReference>
<dbReference type="RefSeq" id="WP_011200424.1">
    <property type="nucleotide sequence ID" value="NC_006300.1"/>
</dbReference>
<dbReference type="SMR" id="Q65T53"/>
<dbReference type="STRING" id="221988.MS1250"/>
<dbReference type="KEGG" id="msu:MS1250"/>
<dbReference type="eggNOG" id="COG0369">
    <property type="taxonomic scope" value="Bacteria"/>
</dbReference>
<dbReference type="HOGENOM" id="CLU_001570_17_7_6"/>
<dbReference type="OrthoDB" id="9816402at2"/>
<dbReference type="UniPathway" id="UPA00140">
    <property type="reaction ID" value="UER00207"/>
</dbReference>
<dbReference type="Proteomes" id="UP000000607">
    <property type="component" value="Chromosome"/>
</dbReference>
<dbReference type="GO" id="GO:0005829">
    <property type="term" value="C:cytosol"/>
    <property type="evidence" value="ECO:0007669"/>
    <property type="project" value="TreeGrafter"/>
</dbReference>
<dbReference type="GO" id="GO:0050660">
    <property type="term" value="F:flavin adenine dinucleotide binding"/>
    <property type="evidence" value="ECO:0007669"/>
    <property type="project" value="InterPro"/>
</dbReference>
<dbReference type="GO" id="GO:0010181">
    <property type="term" value="F:FMN binding"/>
    <property type="evidence" value="ECO:0007669"/>
    <property type="project" value="InterPro"/>
</dbReference>
<dbReference type="GO" id="GO:0004783">
    <property type="term" value="F:sulfite reductase (NADPH) activity"/>
    <property type="evidence" value="ECO:0007669"/>
    <property type="project" value="UniProtKB-UniRule"/>
</dbReference>
<dbReference type="GO" id="GO:0019344">
    <property type="term" value="P:cysteine biosynthetic process"/>
    <property type="evidence" value="ECO:0007669"/>
    <property type="project" value="UniProtKB-KW"/>
</dbReference>
<dbReference type="GO" id="GO:0070814">
    <property type="term" value="P:hydrogen sulfide biosynthetic process"/>
    <property type="evidence" value="ECO:0007669"/>
    <property type="project" value="UniProtKB-UniRule"/>
</dbReference>
<dbReference type="GO" id="GO:0000103">
    <property type="term" value="P:sulfate assimilation"/>
    <property type="evidence" value="ECO:0007669"/>
    <property type="project" value="UniProtKB-UniRule"/>
</dbReference>
<dbReference type="CDD" id="cd06199">
    <property type="entry name" value="SiR"/>
    <property type="match status" value="1"/>
</dbReference>
<dbReference type="FunFam" id="3.40.50.80:FF:000001">
    <property type="entry name" value="NADPH--cytochrome P450 reductase 1"/>
    <property type="match status" value="1"/>
</dbReference>
<dbReference type="Gene3D" id="3.40.50.360">
    <property type="match status" value="1"/>
</dbReference>
<dbReference type="Gene3D" id="1.20.990.10">
    <property type="entry name" value="NADPH-cytochrome p450 Reductase, Chain A, domain 3"/>
    <property type="match status" value="1"/>
</dbReference>
<dbReference type="Gene3D" id="3.40.50.80">
    <property type="entry name" value="Nucleotide-binding domain of ferredoxin-NADP reductase (FNR) module"/>
    <property type="match status" value="1"/>
</dbReference>
<dbReference type="Gene3D" id="2.40.30.10">
    <property type="entry name" value="Translation factors"/>
    <property type="match status" value="1"/>
</dbReference>
<dbReference type="HAMAP" id="MF_01541">
    <property type="entry name" value="CysJ"/>
    <property type="match status" value="1"/>
</dbReference>
<dbReference type="InterPro" id="IPR010199">
    <property type="entry name" value="CysJ"/>
</dbReference>
<dbReference type="InterPro" id="IPR003097">
    <property type="entry name" value="CysJ-like_FAD-binding"/>
</dbReference>
<dbReference type="InterPro" id="IPR029758">
    <property type="entry name" value="CysJ_Proteobact"/>
</dbReference>
<dbReference type="InterPro" id="IPR017927">
    <property type="entry name" value="FAD-bd_FR_type"/>
</dbReference>
<dbReference type="InterPro" id="IPR001094">
    <property type="entry name" value="Flavdoxin-like"/>
</dbReference>
<dbReference type="InterPro" id="IPR008254">
    <property type="entry name" value="Flavodoxin/NO_synth"/>
</dbReference>
<dbReference type="InterPro" id="IPR001709">
    <property type="entry name" value="Flavoprot_Pyr_Nucl_cyt_Rdtase"/>
</dbReference>
<dbReference type="InterPro" id="IPR029039">
    <property type="entry name" value="Flavoprotein-like_sf"/>
</dbReference>
<dbReference type="InterPro" id="IPR039261">
    <property type="entry name" value="FNR_nucleotide-bd"/>
</dbReference>
<dbReference type="InterPro" id="IPR023173">
    <property type="entry name" value="NADPH_Cyt_P450_Rdtase_alpha"/>
</dbReference>
<dbReference type="InterPro" id="IPR001433">
    <property type="entry name" value="OxRdtase_FAD/NAD-bd"/>
</dbReference>
<dbReference type="InterPro" id="IPR017938">
    <property type="entry name" value="Riboflavin_synthase-like_b-brl"/>
</dbReference>
<dbReference type="NCBIfam" id="TIGR01931">
    <property type="entry name" value="cysJ"/>
    <property type="match status" value="1"/>
</dbReference>
<dbReference type="NCBIfam" id="NF004859">
    <property type="entry name" value="PRK06214.1"/>
    <property type="match status" value="1"/>
</dbReference>
<dbReference type="PANTHER" id="PTHR19384:SF128">
    <property type="entry name" value="NADPH OXIDOREDUCTASE A"/>
    <property type="match status" value="1"/>
</dbReference>
<dbReference type="PANTHER" id="PTHR19384">
    <property type="entry name" value="NITRIC OXIDE SYNTHASE-RELATED"/>
    <property type="match status" value="1"/>
</dbReference>
<dbReference type="Pfam" id="PF00667">
    <property type="entry name" value="FAD_binding_1"/>
    <property type="match status" value="1"/>
</dbReference>
<dbReference type="Pfam" id="PF00258">
    <property type="entry name" value="Flavodoxin_1"/>
    <property type="match status" value="1"/>
</dbReference>
<dbReference type="Pfam" id="PF00175">
    <property type="entry name" value="NAD_binding_1"/>
    <property type="match status" value="1"/>
</dbReference>
<dbReference type="PIRSF" id="PIRSF000207">
    <property type="entry name" value="SiR-FP_CysJ"/>
    <property type="match status" value="1"/>
</dbReference>
<dbReference type="PRINTS" id="PR00369">
    <property type="entry name" value="FLAVODOXIN"/>
</dbReference>
<dbReference type="PRINTS" id="PR00371">
    <property type="entry name" value="FPNCR"/>
</dbReference>
<dbReference type="SUPFAM" id="SSF52343">
    <property type="entry name" value="Ferredoxin reductase-like, C-terminal NADP-linked domain"/>
    <property type="match status" value="1"/>
</dbReference>
<dbReference type="SUPFAM" id="SSF52218">
    <property type="entry name" value="Flavoproteins"/>
    <property type="match status" value="1"/>
</dbReference>
<dbReference type="SUPFAM" id="SSF63380">
    <property type="entry name" value="Riboflavin synthase domain-like"/>
    <property type="match status" value="1"/>
</dbReference>
<dbReference type="PROSITE" id="PS51384">
    <property type="entry name" value="FAD_FR"/>
    <property type="match status" value="1"/>
</dbReference>
<dbReference type="PROSITE" id="PS50902">
    <property type="entry name" value="FLAVODOXIN_LIKE"/>
    <property type="match status" value="1"/>
</dbReference>
<proteinExistence type="inferred from homology"/>